<comment type="function">
    <text evidence="4 8 14">Catalyzes the oxidation of glycolate to glyoxylate, with a reduction of O2 to H2O2 (PubMed:1324737, PubMed:7705356). Is a key enzyme in photorespiration in green plants (Probable). To a lesser extent, is also able to use L-lactate and 2-hydroxbyutanoate as substrate in vitro, but shows almost no activity with L-mandelate (PubMed:7705356).</text>
</comment>
<comment type="catalytic activity">
    <reaction evidence="4 8">
        <text>glycolate + O2 = glyoxylate + H2O2</text>
        <dbReference type="Rhea" id="RHEA:25311"/>
        <dbReference type="ChEBI" id="CHEBI:15379"/>
        <dbReference type="ChEBI" id="CHEBI:16240"/>
        <dbReference type="ChEBI" id="CHEBI:29805"/>
        <dbReference type="ChEBI" id="CHEBI:36655"/>
        <dbReference type="EC" id="1.1.3.15"/>
    </reaction>
    <physiologicalReaction direction="left-to-right" evidence="15">
        <dbReference type="Rhea" id="RHEA:25312"/>
    </physiologicalReaction>
</comment>
<comment type="catalytic activity">
    <reaction evidence="8">
        <text>a (2S)-2-hydroxycarboxylate + O2 = a 2-oxocarboxylate + H2O2</text>
        <dbReference type="Rhea" id="RHEA:16789"/>
        <dbReference type="ChEBI" id="CHEBI:15379"/>
        <dbReference type="ChEBI" id="CHEBI:16240"/>
        <dbReference type="ChEBI" id="CHEBI:35179"/>
        <dbReference type="ChEBI" id="CHEBI:58123"/>
        <dbReference type="EC" id="1.1.3.15"/>
    </reaction>
    <physiologicalReaction direction="left-to-right" evidence="15">
        <dbReference type="Rhea" id="RHEA:16790"/>
    </physiologicalReaction>
</comment>
<comment type="cofactor">
    <cofactor evidence="5 6 8 9">
        <name>FMN</name>
        <dbReference type="ChEBI" id="CHEBI:58210"/>
    </cofactor>
    <text evidence="6">Binds 1 FMN per subunit.</text>
</comment>
<comment type="biophysicochemical properties">
    <kinetics>
        <KM evidence="4">0.2 mM for glycolate (at 25 degrees Celsius)</KM>
        <KM evidence="8">1 mM for glycolate</KM>
        <KM evidence="8">11.5 mM for L-lactate</KM>
        <KM evidence="8">0.21 mM for O2</KM>
        <KM evidence="8">3 mM for L-2-hydroxbyutanoate</KM>
        <KM evidence="8">58 mM for L-mandelate</KM>
        <text evidence="8">kcat is 20 sec(-1) with glycolate as substrate. kcat is 11 sec(-1) with L-lactate as substrate. kcat is 13.2 sec(-1) with L-2-hydroxbyutanoate as substrate. kcat is 0.09 sec(-1) with L-mandelate as substrate.</text>
    </kinetics>
</comment>
<comment type="pathway">
    <text evidence="14">Photosynthesis; photorespiration; glycine from 2-phosphoglycolate: step 2/3.</text>
</comment>
<comment type="subunit">
    <text evidence="16">Homotetramer.</text>
</comment>
<comment type="subcellular location">
    <subcellularLocation>
        <location>Peroxisome</location>
    </subcellularLocation>
</comment>
<comment type="similarity">
    <text evidence="3">Belongs to the FMN-dependent alpha-hydroxy acid dehydrogenase family.</text>
</comment>
<name>GOX_SPIOL</name>
<dbReference type="EC" id="1.1.3.15" evidence="4 8"/>
<dbReference type="EMBL" id="J03492">
    <property type="protein sequence ID" value="AAA34030.1"/>
    <property type="molecule type" value="mRNA"/>
</dbReference>
<dbReference type="PIR" id="A28496">
    <property type="entry name" value="OXSPH"/>
</dbReference>
<dbReference type="RefSeq" id="NP_001413439.1">
    <property type="nucleotide sequence ID" value="NM_001426510.1"/>
</dbReference>
<dbReference type="RefSeq" id="XP_021866989.1">
    <property type="nucleotide sequence ID" value="XM_022011297.2"/>
</dbReference>
<dbReference type="PDB" id="1AL7">
    <property type="method" value="X-ray"/>
    <property type="resolution" value="2.60 A"/>
    <property type="chains" value="A=1-359"/>
</dbReference>
<dbReference type="PDB" id="1AL8">
    <property type="method" value="X-ray"/>
    <property type="resolution" value="2.20 A"/>
    <property type="chains" value="A=1-359"/>
</dbReference>
<dbReference type="PDB" id="1GOX">
    <property type="method" value="X-ray"/>
    <property type="resolution" value="2.00 A"/>
    <property type="chains" value="A=1-369"/>
</dbReference>
<dbReference type="PDB" id="1GYL">
    <property type="method" value="X-ray"/>
    <property type="resolution" value="3.00 A"/>
    <property type="chains" value="A/B=1-369"/>
</dbReference>
<dbReference type="PDB" id="1HUV">
    <property type="method" value="X-ray"/>
    <property type="resolution" value="2.15 A"/>
    <property type="chains" value="A=176-195"/>
</dbReference>
<dbReference type="PDB" id="1P4C">
    <property type="method" value="X-ray"/>
    <property type="resolution" value="1.35 A"/>
    <property type="chains" value="A=176-195"/>
</dbReference>
<dbReference type="PDB" id="1P5B">
    <property type="method" value="X-ray"/>
    <property type="resolution" value="1.35 A"/>
    <property type="chains" value="A=176-195"/>
</dbReference>
<dbReference type="PDB" id="2A7N">
    <property type="method" value="X-ray"/>
    <property type="resolution" value="1.80 A"/>
    <property type="chains" value="A=176-195"/>
</dbReference>
<dbReference type="PDB" id="2A7P">
    <property type="method" value="X-ray"/>
    <property type="resolution" value="2.20 A"/>
    <property type="chains" value="A=176-195"/>
</dbReference>
<dbReference type="PDB" id="2A85">
    <property type="method" value="X-ray"/>
    <property type="resolution" value="2.50 A"/>
    <property type="chains" value="A=176-195"/>
</dbReference>
<dbReference type="PDBsum" id="1AL7"/>
<dbReference type="PDBsum" id="1AL8"/>
<dbReference type="PDBsum" id="1GOX"/>
<dbReference type="PDBsum" id="1GYL"/>
<dbReference type="PDBsum" id="1HUV"/>
<dbReference type="PDBsum" id="1P4C"/>
<dbReference type="PDBsum" id="1P5B"/>
<dbReference type="PDBsum" id="2A7N"/>
<dbReference type="PDBsum" id="2A7P"/>
<dbReference type="PDBsum" id="2A85"/>
<dbReference type="SMR" id="P05414"/>
<dbReference type="iPTMnet" id="P05414"/>
<dbReference type="GeneID" id="110805661"/>
<dbReference type="OrthoDB" id="25826at2759"/>
<dbReference type="UniPathway" id="UPA00951">
    <property type="reaction ID" value="UER00912"/>
</dbReference>
<dbReference type="EvolutionaryTrace" id="P05414"/>
<dbReference type="Proteomes" id="UP001155700">
    <property type="component" value="Unplaced"/>
</dbReference>
<dbReference type="GO" id="GO:0005777">
    <property type="term" value="C:peroxisome"/>
    <property type="evidence" value="ECO:0000318"/>
    <property type="project" value="GO_Central"/>
</dbReference>
<dbReference type="GO" id="GO:0003973">
    <property type="term" value="F:(S)-2-hydroxy-acid oxidase activity"/>
    <property type="evidence" value="ECO:0000318"/>
    <property type="project" value="GO_Central"/>
</dbReference>
<dbReference type="GO" id="GO:0010181">
    <property type="term" value="F:FMN binding"/>
    <property type="evidence" value="ECO:0007669"/>
    <property type="project" value="InterPro"/>
</dbReference>
<dbReference type="GO" id="GO:0009854">
    <property type="term" value="P:oxidative photosynthetic carbon pathway"/>
    <property type="evidence" value="ECO:0007669"/>
    <property type="project" value="UniProtKB-KW"/>
</dbReference>
<dbReference type="GO" id="GO:0051707">
    <property type="term" value="P:response to other organism"/>
    <property type="evidence" value="ECO:0007669"/>
    <property type="project" value="UniProtKB-ARBA"/>
</dbReference>
<dbReference type="CDD" id="cd02809">
    <property type="entry name" value="alpha_hydroxyacid_oxid_FMN"/>
    <property type="match status" value="1"/>
</dbReference>
<dbReference type="FunFam" id="3.20.20.70:FF:000063">
    <property type="entry name" value="peroxisomal (S)-2-hydroxy-acid oxidase GLO1"/>
    <property type="match status" value="1"/>
</dbReference>
<dbReference type="Gene3D" id="3.20.20.70">
    <property type="entry name" value="Aldolase class I"/>
    <property type="match status" value="1"/>
</dbReference>
<dbReference type="InterPro" id="IPR013785">
    <property type="entry name" value="Aldolase_TIM"/>
</dbReference>
<dbReference type="InterPro" id="IPR012133">
    <property type="entry name" value="Alpha-hydoxy_acid_DH_FMN"/>
</dbReference>
<dbReference type="InterPro" id="IPR000262">
    <property type="entry name" value="FMN-dep_DH"/>
</dbReference>
<dbReference type="InterPro" id="IPR037396">
    <property type="entry name" value="FMN_HAD"/>
</dbReference>
<dbReference type="InterPro" id="IPR008259">
    <property type="entry name" value="FMN_hydac_DH_AS"/>
</dbReference>
<dbReference type="PANTHER" id="PTHR10578:SF107">
    <property type="entry name" value="2-HYDROXYACID OXIDASE 1"/>
    <property type="match status" value="1"/>
</dbReference>
<dbReference type="PANTHER" id="PTHR10578">
    <property type="entry name" value="S -2-HYDROXY-ACID OXIDASE-RELATED"/>
    <property type="match status" value="1"/>
</dbReference>
<dbReference type="Pfam" id="PF01070">
    <property type="entry name" value="FMN_dh"/>
    <property type="match status" value="1"/>
</dbReference>
<dbReference type="PIRSF" id="PIRSF000138">
    <property type="entry name" value="Al-hdrx_acd_dh"/>
    <property type="match status" value="1"/>
</dbReference>
<dbReference type="SUPFAM" id="SSF51395">
    <property type="entry name" value="FMN-linked oxidoreductases"/>
    <property type="match status" value="1"/>
</dbReference>
<dbReference type="PROSITE" id="PS00557">
    <property type="entry name" value="FMN_HYDROXY_ACID_DH_1"/>
    <property type="match status" value="1"/>
</dbReference>
<dbReference type="PROSITE" id="PS51349">
    <property type="entry name" value="FMN_HYDROXY_ACID_DH_2"/>
    <property type="match status" value="1"/>
</dbReference>
<evidence type="ECO:0000250" key="1">
    <source>
        <dbReference type="UniProtKB" id="Q9UJM8"/>
    </source>
</evidence>
<evidence type="ECO:0000255" key="2"/>
<evidence type="ECO:0000255" key="3">
    <source>
        <dbReference type="PROSITE-ProRule" id="PRU00683"/>
    </source>
</evidence>
<evidence type="ECO:0000269" key="4">
    <source>
    </source>
</evidence>
<evidence type="ECO:0000269" key="5">
    <source>
    </source>
</evidence>
<evidence type="ECO:0000269" key="6">
    <source>
    </source>
</evidence>
<evidence type="ECO:0000269" key="7">
    <source>
    </source>
</evidence>
<evidence type="ECO:0000269" key="8">
    <source>
    </source>
</evidence>
<evidence type="ECO:0000269" key="9">
    <source>
    </source>
</evidence>
<evidence type="ECO:0000303" key="10">
    <source>
    </source>
</evidence>
<evidence type="ECO:0000303" key="11">
    <source>
    </source>
</evidence>
<evidence type="ECO:0000303" key="12">
    <source>
    </source>
</evidence>
<evidence type="ECO:0000303" key="13">
    <source>
    </source>
</evidence>
<evidence type="ECO:0000305" key="14">
    <source>
    </source>
</evidence>
<evidence type="ECO:0000305" key="15">
    <source>
    </source>
</evidence>
<evidence type="ECO:0000305" key="16">
    <source>
    </source>
</evidence>
<evidence type="ECO:0007744" key="17">
    <source>
        <dbReference type="PDB" id="1AL7"/>
    </source>
</evidence>
<evidence type="ECO:0007744" key="18">
    <source>
        <dbReference type="PDB" id="1AL8"/>
    </source>
</evidence>
<evidence type="ECO:0007744" key="19">
    <source>
        <dbReference type="PDB" id="1GOX"/>
    </source>
</evidence>
<evidence type="ECO:0007744" key="20">
    <source>
        <dbReference type="PDB" id="1GYL"/>
    </source>
</evidence>
<evidence type="ECO:0007829" key="21">
    <source>
        <dbReference type="PDB" id="1GOX"/>
    </source>
</evidence>
<evidence type="ECO:0007829" key="22">
    <source>
        <dbReference type="PDB" id="1GYL"/>
    </source>
</evidence>
<evidence type="ECO:0007829" key="23">
    <source>
        <dbReference type="PDB" id="1P4C"/>
    </source>
</evidence>
<proteinExistence type="evidence at protein level"/>
<reference key="1">
    <citation type="journal article" date="1987" name="J. Biol. Chem.">
        <title>The primary structure of spinach glycolate oxidase deduced from the DNA sequence of a cDNA clone.</title>
        <authorList>
            <person name="Volokita M."/>
            <person name="Somerville C.R."/>
        </authorList>
    </citation>
    <scope>NUCLEOTIDE SEQUENCE [MRNA]</scope>
</reference>
<reference key="2">
    <citation type="journal article" date="1988" name="Eur. J. Biochem.">
        <title>Primary structure of glycolate oxidase from spinach.</title>
        <authorList>
            <person name="Cederlund E."/>
            <person name="Lindqvist Y."/>
            <person name="Soederlund G."/>
            <person name="Braenden C.-I."/>
            <person name="Joernvall H."/>
        </authorList>
    </citation>
    <scope>PROTEIN SEQUENCE</scope>
    <scope>ACETYLATION AT MET-1</scope>
</reference>
<reference key="3">
    <citation type="journal article" date="1989" name="J. Biol. Chem.">
        <title>The active site of spinach glycolate oxidase.</title>
        <authorList>
            <person name="Lindqvist Y."/>
            <person name="Braenden C.-I."/>
        </authorList>
    </citation>
    <scope>FUNCTION</scope>
    <scope>COFACTOR</scope>
    <scope>ACTIVE SITE</scope>
</reference>
<reference key="4">
    <citation type="journal article" date="1992" name="Biochim. Biophys. Acta">
        <title>Direct expression of active spinach glycolate oxidase in Escherichia coli.</title>
        <authorList>
            <person name="Macheroux P."/>
            <person name="Mulrooney S.B."/>
            <person name="Williams C.H. Jr."/>
            <person name="Massey V."/>
        </authorList>
    </citation>
    <scope>FUNCTION</scope>
    <scope>CATALYTIC ACTIVITY</scope>
    <scope>BIOPHYSICOCHEMICAL PROPERTIES</scope>
</reference>
<reference evidence="19" key="5">
    <citation type="journal article" date="1989" name="J. Mol. Biol.">
        <title>Refined structure of spinach glycolate oxidase at 2-A resolution.</title>
        <authorList>
            <person name="Lindqvist Y."/>
        </authorList>
    </citation>
    <scope>X-RAY CRYSTALLOGRAPHY (2.0 ANGSTROMS) IN COMPLEX WITH FMN</scope>
    <scope>COFACTOR</scope>
</reference>
<reference evidence="20" key="6">
    <citation type="journal article" date="1995" name="Eur. J. Biochem.">
        <title>Involvement of Tyr24 and Trp108 in substrate binding and substrate specificity of glycolate oxidase.</title>
        <authorList>
            <person name="Stenberg K."/>
            <person name="Clausen T."/>
            <person name="Lindqvist Y."/>
            <person name="Macheroux P."/>
        </authorList>
    </citation>
    <scope>X-RAY CRYSTALLOGRAPHY (3.00 ANGSTROMS) OF MUTANT PHE-24 IN COMPLEX WITH FMN</scope>
    <scope>FUNCTION</scope>
    <scope>CATALYTIC ACTIVITY</scope>
    <scope>BIOPHYSICOCHEMICAL PROPERTIES</scope>
    <scope>SUBSTRATE SPECIFICITY</scope>
    <scope>COFACTOR</scope>
    <scope>MUTAGENESIS OF TYR-24 AND TRP-108</scope>
</reference>
<reference evidence="17 18" key="7">
    <citation type="journal article" date="1997" name="Protein Sci.">
        <title>Three-dimensional structures of glycolate oxidase with bound active-site inhibitors.</title>
        <authorList>
            <person name="Stenberg K."/>
            <person name="Lindqvist Y."/>
        </authorList>
    </citation>
    <scope>X-RAY CRYSTALLOGRAPHY (2.2 ANGSTROMS) OF 1-359 IN COMPLEXES WITH FMN AND INHIBITORS</scope>
    <scope>COFACTOR</scope>
    <scope>SUBUNIT</scope>
</reference>
<organism>
    <name type="scientific">Spinacia oleracea</name>
    <name type="common">Spinach</name>
    <dbReference type="NCBI Taxonomy" id="3562"/>
    <lineage>
        <taxon>Eukaryota</taxon>
        <taxon>Viridiplantae</taxon>
        <taxon>Streptophyta</taxon>
        <taxon>Embryophyta</taxon>
        <taxon>Tracheophyta</taxon>
        <taxon>Spermatophyta</taxon>
        <taxon>Magnoliopsida</taxon>
        <taxon>eudicotyledons</taxon>
        <taxon>Gunneridae</taxon>
        <taxon>Pentapetalae</taxon>
        <taxon>Caryophyllales</taxon>
        <taxon>Chenopodiaceae</taxon>
        <taxon>Chenopodioideae</taxon>
        <taxon>Anserineae</taxon>
        <taxon>Spinacia</taxon>
    </lineage>
</organism>
<keyword id="KW-0002">3D-structure</keyword>
<keyword id="KW-0007">Acetylation</keyword>
<keyword id="KW-0903">Direct protein sequencing</keyword>
<keyword id="KW-0285">Flavoprotein</keyword>
<keyword id="KW-0288">FMN</keyword>
<keyword id="KW-0323">Glycolate pathway</keyword>
<keyword id="KW-0560">Oxidoreductase</keyword>
<keyword id="KW-0576">Peroxisome</keyword>
<keyword id="KW-0601">Photorespiration</keyword>
<keyword id="KW-1185">Reference proteome</keyword>
<feature type="chain" id="PRO_0000206325" description="Glycolate oxidase">
    <location>
        <begin position="1"/>
        <end position="369"/>
    </location>
</feature>
<feature type="domain" description="FMN hydroxy acid dehydrogenase" evidence="3">
    <location>
        <begin position="1"/>
        <end position="359"/>
    </location>
</feature>
<feature type="short sequence motif" description="Microbody targeting signal" evidence="2">
    <location>
        <begin position="367"/>
        <end position="369"/>
    </location>
</feature>
<feature type="active site" description="Proton acceptor" evidence="3 14">
    <location>
        <position position="254"/>
    </location>
</feature>
<feature type="binding site" evidence="1">
    <location>
        <position position="24"/>
    </location>
    <ligand>
        <name>glyoxylate</name>
        <dbReference type="ChEBI" id="CHEBI:36655"/>
    </ligand>
</feature>
<feature type="binding site" evidence="6 9 17 19">
    <location>
        <begin position="77"/>
        <end position="79"/>
    </location>
    <ligand>
        <name>FMN</name>
        <dbReference type="ChEBI" id="CHEBI:58210"/>
    </ligand>
</feature>
<feature type="binding site" evidence="9 17">
    <location>
        <position position="106"/>
    </location>
    <ligand>
        <name>FMN</name>
        <dbReference type="ChEBI" id="CHEBI:58210"/>
    </ligand>
</feature>
<feature type="binding site" evidence="6 9 17 19">
    <location>
        <begin position="127"/>
        <end position="129"/>
    </location>
    <ligand>
        <name>FMN</name>
        <dbReference type="ChEBI" id="CHEBI:58210"/>
    </ligand>
</feature>
<feature type="binding site" evidence="1">
    <location>
        <position position="129"/>
    </location>
    <ligand>
        <name>glyoxylate</name>
        <dbReference type="ChEBI" id="CHEBI:36655"/>
    </ligand>
</feature>
<feature type="binding site" evidence="6 9 17 19">
    <location>
        <position position="155"/>
    </location>
    <ligand>
        <name>FMN</name>
        <dbReference type="ChEBI" id="CHEBI:58210"/>
    </ligand>
</feature>
<feature type="binding site" evidence="1">
    <location>
        <position position="164"/>
    </location>
    <ligand>
        <name>glyoxylate</name>
        <dbReference type="ChEBI" id="CHEBI:36655"/>
    </ligand>
</feature>
<feature type="binding site" evidence="6 9 17 19">
    <location>
        <position position="230"/>
    </location>
    <ligand>
        <name>FMN</name>
        <dbReference type="ChEBI" id="CHEBI:58210"/>
    </ligand>
</feature>
<feature type="binding site" evidence="6 9 17 19">
    <location>
        <position position="252"/>
    </location>
    <ligand>
        <name>FMN</name>
        <dbReference type="ChEBI" id="CHEBI:58210"/>
    </ligand>
</feature>
<feature type="binding site" evidence="1">
    <location>
        <position position="254"/>
    </location>
    <ligand>
        <name>glyoxylate</name>
        <dbReference type="ChEBI" id="CHEBI:36655"/>
    </ligand>
</feature>
<feature type="binding site" evidence="1">
    <location>
        <position position="257"/>
    </location>
    <ligand>
        <name>glyoxylate</name>
        <dbReference type="ChEBI" id="CHEBI:36655"/>
    </ligand>
</feature>
<feature type="binding site" evidence="6 9 17 19">
    <location>
        <begin position="285"/>
        <end position="289"/>
    </location>
    <ligand>
        <name>FMN</name>
        <dbReference type="ChEBI" id="CHEBI:58210"/>
    </ligand>
</feature>
<feature type="binding site" evidence="6 9 17 19">
    <location>
        <begin position="308"/>
        <end position="309"/>
    </location>
    <ligand>
        <name>FMN</name>
        <dbReference type="ChEBI" id="CHEBI:58210"/>
    </ligand>
</feature>
<feature type="site" description="Involved in determining the substrate specificity of glycolate oxidase" evidence="15">
    <location>
        <position position="108"/>
    </location>
</feature>
<feature type="modified residue" description="N-acetylmethionine" evidence="7">
    <location>
        <position position="1"/>
    </location>
</feature>
<feature type="mutagenesis site" description="10-fold decrease in affinity for glycolate." evidence="8">
    <original>Y</original>
    <variation>F</variation>
    <location>
        <position position="24"/>
    </location>
</feature>
<feature type="mutagenesis site" description="100-fold decrease in affinity for glycolate and 500-fold decrease in activity." evidence="8">
    <original>W</original>
    <variation>S</variation>
    <location>
        <position position="108"/>
    </location>
</feature>
<feature type="helix" evidence="21">
    <location>
        <begin position="8"/>
        <end position="16"/>
    </location>
</feature>
<feature type="helix" evidence="21">
    <location>
        <begin position="19"/>
        <end position="26"/>
    </location>
</feature>
<feature type="helix" evidence="21">
    <location>
        <begin position="33"/>
        <end position="40"/>
    </location>
</feature>
<feature type="helix" evidence="21">
    <location>
        <begin position="41"/>
        <end position="44"/>
    </location>
</feature>
<feature type="strand" evidence="21">
    <location>
        <begin position="45"/>
        <end position="47"/>
    </location>
</feature>
<feature type="strand" evidence="21">
    <location>
        <begin position="62"/>
        <end position="64"/>
    </location>
</feature>
<feature type="strand" evidence="21">
    <location>
        <begin position="67"/>
        <end position="75"/>
    </location>
</feature>
<feature type="helix" evidence="21">
    <location>
        <begin position="81"/>
        <end position="83"/>
    </location>
</feature>
<feature type="helix" evidence="21">
    <location>
        <begin position="88"/>
        <end position="98"/>
    </location>
</feature>
<feature type="strand" evidence="21">
    <location>
        <begin position="103"/>
        <end position="105"/>
    </location>
</feature>
<feature type="helix" evidence="21">
    <location>
        <begin position="113"/>
        <end position="117"/>
    </location>
</feature>
<feature type="strand" evidence="21">
    <location>
        <begin position="124"/>
        <end position="128"/>
    </location>
</feature>
<feature type="strand" evidence="21">
    <location>
        <begin position="131"/>
        <end position="133"/>
    </location>
</feature>
<feature type="helix" evidence="21">
    <location>
        <begin position="134"/>
        <end position="146"/>
    </location>
</feature>
<feature type="strand" evidence="21">
    <location>
        <begin position="151"/>
        <end position="155"/>
    </location>
</feature>
<feature type="helix" evidence="21">
    <location>
        <begin position="165"/>
        <end position="169"/>
    </location>
</feature>
<feature type="helix" evidence="23">
    <location>
        <begin position="181"/>
        <end position="183"/>
    </location>
</feature>
<feature type="strand" evidence="21">
    <location>
        <begin position="184"/>
        <end position="186"/>
    </location>
</feature>
<feature type="helix" evidence="21">
    <location>
        <begin position="199"/>
        <end position="205"/>
    </location>
</feature>
<feature type="helix" evidence="21">
    <location>
        <begin position="213"/>
        <end position="222"/>
    </location>
</feature>
<feature type="strand" evidence="21">
    <location>
        <begin position="227"/>
        <end position="230"/>
    </location>
</feature>
<feature type="helix" evidence="21">
    <location>
        <begin position="235"/>
        <end position="243"/>
    </location>
</feature>
<feature type="strand" evidence="21">
    <location>
        <begin position="247"/>
        <end position="251"/>
    </location>
</feature>
<feature type="helix" evidence="21">
    <location>
        <begin position="254"/>
        <end position="256"/>
    </location>
</feature>
<feature type="strand" evidence="22">
    <location>
        <begin position="260"/>
        <end position="262"/>
    </location>
</feature>
<feature type="helix" evidence="21">
    <location>
        <begin position="265"/>
        <end position="275"/>
    </location>
</feature>
<feature type="turn" evidence="21">
    <location>
        <begin position="276"/>
        <end position="278"/>
    </location>
</feature>
<feature type="strand" evidence="21">
    <location>
        <begin position="282"/>
        <end position="287"/>
    </location>
</feature>
<feature type="helix" evidence="21">
    <location>
        <begin position="291"/>
        <end position="300"/>
    </location>
</feature>
<feature type="strand" evidence="21">
    <location>
        <begin position="303"/>
        <end position="307"/>
    </location>
</feature>
<feature type="helix" evidence="21">
    <location>
        <begin position="309"/>
        <end position="341"/>
    </location>
</feature>
<feature type="turn" evidence="21">
    <location>
        <begin position="346"/>
        <end position="348"/>
    </location>
</feature>
<feature type="helix" evidence="21">
    <location>
        <begin position="351"/>
        <end position="353"/>
    </location>
</feature>
<feature type="strand" evidence="21">
    <location>
        <begin position="354"/>
        <end position="356"/>
    </location>
</feature>
<sequence>MEITNVNEYEAIAKQKLPKMVYDYYASGAEDQWTLAENRNAFSRILFRPRILIDVTNIDMTTTILGFKISMPIMIAPTAMQKMAHPEGEYATARAASAAGTIMTLSSWATSSVEEVASTGPGIRFFQLYVYKDRNVVAQLVRRAERAGFKAIALTVDTPRLGRREADIKNRFVLPPFLTLKNFEGIDLGKMDKANDSGLSSYVAGQIDRSLSWKDVAWLQTITSLPILVKGVITAEDARLAVQHGAAGIIVSNHGARQLDYVPATIMALEEVVKAAQGRIPVFLDGGVRRGTDVFKALALGAAGVFIGRPVVFSLAAEGEAGVKKVLQMMRDEFELTMALSGCRSLKEISRSHIAADWDGPSSRAVARL</sequence>
<protein>
    <recommendedName>
        <fullName evidence="10 11 12">Glycolate oxidase</fullName>
        <shortName evidence="10">GAO</shortName>
        <shortName evidence="13">GOX</shortName>
        <ecNumber evidence="4 8">1.1.3.15</ecNumber>
    </recommendedName>
    <alternativeName>
        <fullName>Short chain alpha-hydroxy acid oxidase</fullName>
    </alternativeName>
</protein>
<accession>P05414</accession>